<protein>
    <recommendedName>
        <fullName>Unknown protein 3</fullName>
    </recommendedName>
</protein>
<reference key="1">
    <citation type="journal article" date="2008" name="J. Proteomics">
        <title>A proteomics approach to identify proteins differentially expressed in Douglas-fir seedlings infected by Phellinus sulphurascens.</title>
        <authorList>
            <person name="Islam M.A."/>
            <person name="Sturrock R.N."/>
            <person name="Ekramoddoullah A.K.M."/>
        </authorList>
    </citation>
    <scope>IDENTIFICATION BY MASS SPECTROMETRY</scope>
</reference>
<proteinExistence type="evidence at protein level"/>
<evidence type="ECO:0000303" key="1">
    <source>
    </source>
</evidence>
<organism>
    <name type="scientific">Pseudotsuga menziesii</name>
    <name type="common">Douglas-fir</name>
    <name type="synonym">Abies menziesii</name>
    <dbReference type="NCBI Taxonomy" id="3357"/>
    <lineage>
        <taxon>Eukaryota</taxon>
        <taxon>Viridiplantae</taxon>
        <taxon>Streptophyta</taxon>
        <taxon>Embryophyta</taxon>
        <taxon>Tracheophyta</taxon>
        <taxon>Spermatophyta</taxon>
        <taxon>Pinopsida</taxon>
        <taxon>Pinidae</taxon>
        <taxon>Conifers I</taxon>
        <taxon>Pinales</taxon>
        <taxon>Pinaceae</taxon>
        <taxon>Pseudotsuga</taxon>
    </lineage>
</organism>
<name>UP03_PSEMZ</name>
<sequence length="24" mass="2663">THPSVLPFIKQLIGTMDSVRGLPR</sequence>
<feature type="chain" id="PRO_0000347290" description="Unknown protein 3">
    <location>
        <begin position="1" status="less than"/>
        <end position="24" status="greater than"/>
    </location>
</feature>
<feature type="non-terminal residue" evidence="1">
    <location>
        <position position="1"/>
    </location>
</feature>
<feature type="non-terminal residue" evidence="1">
    <location>
        <position position="24"/>
    </location>
</feature>
<accession>P85959</accession>